<evidence type="ECO:0000255" key="1">
    <source>
        <dbReference type="HAMAP-Rule" id="MF_01810"/>
    </source>
</evidence>
<evidence type="ECO:0000256" key="2">
    <source>
        <dbReference type="SAM" id="MobiDB-lite"/>
    </source>
</evidence>
<sequence length="627" mass="71490">MEDRQTRLFLALILSMGIWMGVNYFFFPNTSTKKNTETKQTQSDKTSENTKQQITSGKTKESNSADPVVQKEKITPFDTKKSFIVTDSYIVEFSSLGGKISKFYMKDFTGPNGELIQVARKNPETVVVDGKSYQAVELSRDKGFDFNFSDSLVEISDSPWNYIQFSLTEDKINHSISFSAVSPDRSYQLKKEFRFYPSENYFKLSISIINFSKEKLSFASQKNVRYLRTFGSLGPYPKDRPLSDRDTANFFRFYYLGGSFQDTLDGSSSVGFWSSVGNFFTGNSGTDESFSIKTDKESGVDFAGTGSRYFIAVADPLDHKPHGIVLDNRPKNESGAVLVYDNILLNPGENYNLDFASYIGIRESEGMAFKNPEFDPSQSKNSPFVGLSSDLNKSFNQGITTPFRNGIIWILKQIYRFTIPNYGWSIIIFAILFKLVFYPLNQKQADSMKKMQELSPQLKTINEKFANDPKMRQQKTMELYKKNNVNPVGGCLPMVIQIPIFIALYTAFSDTIDLWNSPFLWVKDLSEPDVIWTSPAIPYFTQTGIGLNLLALLMVGTQVFQTRMTSVSMDPNQKMLMYVMPVMMLYIFWNMPSGVTLYWTFQNVLSIGQQWITNHLKKTEEKKKAKV</sequence>
<comment type="function">
    <text evidence="1">Required for the insertion and/or proper folding and/or complex formation of integral membrane proteins into the membrane. Involved in integration of membrane proteins that insert both dependently and independently of the Sec translocase complex, as well as at least some lipoproteins. Aids folding of multispanning membrane proteins.</text>
</comment>
<comment type="subunit">
    <text evidence="1">Interacts with the Sec translocase complex via SecD. Specifically interacts with transmembrane segments of nascent integral membrane proteins during membrane integration.</text>
</comment>
<comment type="subcellular location">
    <subcellularLocation>
        <location evidence="1">Cell inner membrane</location>
        <topology evidence="1">Multi-pass membrane protein</topology>
    </subcellularLocation>
</comment>
<comment type="similarity">
    <text evidence="1">Belongs to the OXA1/ALB3/YidC family. Type 1 subfamily.</text>
</comment>
<gene>
    <name evidence="1" type="primary">yidC</name>
    <name type="ordered locus">LIC_10157</name>
</gene>
<keyword id="KW-0997">Cell inner membrane</keyword>
<keyword id="KW-1003">Cell membrane</keyword>
<keyword id="KW-0143">Chaperone</keyword>
<keyword id="KW-0472">Membrane</keyword>
<keyword id="KW-0653">Protein transport</keyword>
<keyword id="KW-0812">Transmembrane</keyword>
<keyword id="KW-1133">Transmembrane helix</keyword>
<keyword id="KW-0813">Transport</keyword>
<organism>
    <name type="scientific">Leptospira interrogans serogroup Icterohaemorrhagiae serovar copenhageni (strain Fiocruz L1-130)</name>
    <dbReference type="NCBI Taxonomy" id="267671"/>
    <lineage>
        <taxon>Bacteria</taxon>
        <taxon>Pseudomonadati</taxon>
        <taxon>Spirochaetota</taxon>
        <taxon>Spirochaetia</taxon>
        <taxon>Leptospirales</taxon>
        <taxon>Leptospiraceae</taxon>
        <taxon>Leptospira</taxon>
    </lineage>
</organism>
<reference key="1">
    <citation type="journal article" date="2004" name="J. Bacteriol.">
        <title>Comparative genomics of two Leptospira interrogans serovars reveals novel insights into physiology and pathogenesis.</title>
        <authorList>
            <person name="Nascimento A.L.T.O."/>
            <person name="Ko A.I."/>
            <person name="Martins E.A.L."/>
            <person name="Monteiro-Vitorello C.B."/>
            <person name="Ho P.L."/>
            <person name="Haake D.A."/>
            <person name="Verjovski-Almeida S."/>
            <person name="Hartskeerl R.A."/>
            <person name="Marques M.V."/>
            <person name="Oliveira M.C."/>
            <person name="Menck C.F.M."/>
            <person name="Leite L.C.C."/>
            <person name="Carrer H."/>
            <person name="Coutinho L.L."/>
            <person name="Degrave W.M."/>
            <person name="Dellagostin O.A."/>
            <person name="El-Dorry H."/>
            <person name="Ferro E.S."/>
            <person name="Ferro M.I.T."/>
            <person name="Furlan L.R."/>
            <person name="Gamberini M."/>
            <person name="Giglioti E.A."/>
            <person name="Goes-Neto A."/>
            <person name="Goldman G.H."/>
            <person name="Goldman M.H.S."/>
            <person name="Harakava R."/>
            <person name="Jeronimo S.M.B."/>
            <person name="Junqueira-de-Azevedo I.L.M."/>
            <person name="Kimura E.T."/>
            <person name="Kuramae E.E."/>
            <person name="Lemos E.G.M."/>
            <person name="Lemos M.V.F."/>
            <person name="Marino C.L."/>
            <person name="Nunes L.R."/>
            <person name="de Oliveira R.C."/>
            <person name="Pereira G.G."/>
            <person name="Reis M.S."/>
            <person name="Schriefer A."/>
            <person name="Siqueira W.J."/>
            <person name="Sommer P."/>
            <person name="Tsai S.M."/>
            <person name="Simpson A.J.G."/>
            <person name="Ferro J.A."/>
            <person name="Camargo L.E.A."/>
            <person name="Kitajima J.P."/>
            <person name="Setubal J.C."/>
            <person name="Van Sluys M.A."/>
        </authorList>
    </citation>
    <scope>NUCLEOTIDE SEQUENCE [LARGE SCALE GENOMIC DNA]</scope>
    <source>
        <strain>Fiocruz L1-130</strain>
    </source>
</reference>
<accession>Q72VY8</accession>
<dbReference type="EMBL" id="AE016823">
    <property type="protein sequence ID" value="AAS68786.1"/>
    <property type="molecule type" value="Genomic_DNA"/>
</dbReference>
<dbReference type="RefSeq" id="WP_000390190.1">
    <property type="nucleotide sequence ID" value="NC_005823.1"/>
</dbReference>
<dbReference type="SMR" id="Q72VY8"/>
<dbReference type="GeneID" id="61143511"/>
<dbReference type="KEGG" id="lic:LIC_10157"/>
<dbReference type="HOGENOM" id="CLU_016535_3_0_12"/>
<dbReference type="Proteomes" id="UP000007037">
    <property type="component" value="Chromosome I"/>
</dbReference>
<dbReference type="GO" id="GO:0005886">
    <property type="term" value="C:plasma membrane"/>
    <property type="evidence" value="ECO:0007669"/>
    <property type="project" value="UniProtKB-SubCell"/>
</dbReference>
<dbReference type="GO" id="GO:0032977">
    <property type="term" value="F:membrane insertase activity"/>
    <property type="evidence" value="ECO:0007669"/>
    <property type="project" value="InterPro"/>
</dbReference>
<dbReference type="GO" id="GO:0051205">
    <property type="term" value="P:protein insertion into membrane"/>
    <property type="evidence" value="ECO:0007669"/>
    <property type="project" value="TreeGrafter"/>
</dbReference>
<dbReference type="GO" id="GO:0015031">
    <property type="term" value="P:protein transport"/>
    <property type="evidence" value="ECO:0007669"/>
    <property type="project" value="UniProtKB-KW"/>
</dbReference>
<dbReference type="CDD" id="cd20070">
    <property type="entry name" value="5TM_YidC_Alb3"/>
    <property type="match status" value="1"/>
</dbReference>
<dbReference type="Gene3D" id="2.70.98.90">
    <property type="match status" value="1"/>
</dbReference>
<dbReference type="HAMAP" id="MF_01810">
    <property type="entry name" value="YidC_type1"/>
    <property type="match status" value="1"/>
</dbReference>
<dbReference type="InterPro" id="IPR019998">
    <property type="entry name" value="Membr_insert_YidC"/>
</dbReference>
<dbReference type="InterPro" id="IPR001708">
    <property type="entry name" value="YidC/ALB3/OXA1/COX18"/>
</dbReference>
<dbReference type="InterPro" id="IPR028055">
    <property type="entry name" value="YidC/Oxa/ALB_C"/>
</dbReference>
<dbReference type="InterPro" id="IPR047196">
    <property type="entry name" value="YidC_ALB_C"/>
</dbReference>
<dbReference type="InterPro" id="IPR038221">
    <property type="entry name" value="YidC_periplasmic_sf"/>
</dbReference>
<dbReference type="NCBIfam" id="TIGR03592">
    <property type="entry name" value="yidC_oxa1_cterm"/>
    <property type="match status" value="1"/>
</dbReference>
<dbReference type="PANTHER" id="PTHR12428:SF65">
    <property type="entry name" value="CYTOCHROME C OXIDASE ASSEMBLY PROTEIN COX18, MITOCHONDRIAL"/>
    <property type="match status" value="1"/>
</dbReference>
<dbReference type="PANTHER" id="PTHR12428">
    <property type="entry name" value="OXA1"/>
    <property type="match status" value="1"/>
</dbReference>
<dbReference type="Pfam" id="PF02096">
    <property type="entry name" value="60KD_IMP"/>
    <property type="match status" value="1"/>
</dbReference>
<feature type="chain" id="PRO_0000124720" description="Membrane protein insertase YidC">
    <location>
        <begin position="1"/>
        <end position="627"/>
    </location>
</feature>
<feature type="transmembrane region" description="Helical" evidence="1">
    <location>
        <begin position="8"/>
        <end position="28"/>
    </location>
</feature>
<feature type="transmembrane region" description="Helical" evidence="1">
    <location>
        <begin position="417"/>
        <end position="437"/>
    </location>
</feature>
<feature type="transmembrane region" description="Helical" evidence="1">
    <location>
        <begin position="488"/>
        <end position="508"/>
    </location>
</feature>
<feature type="transmembrane region" description="Helical" evidence="1">
    <location>
        <begin position="536"/>
        <end position="556"/>
    </location>
</feature>
<feature type="transmembrane region" description="Helical" evidence="1">
    <location>
        <begin position="575"/>
        <end position="595"/>
    </location>
</feature>
<feature type="region of interest" description="Disordered" evidence="2">
    <location>
        <begin position="33"/>
        <end position="68"/>
    </location>
</feature>
<feature type="compositionally biased region" description="Polar residues" evidence="2">
    <location>
        <begin position="33"/>
        <end position="57"/>
    </location>
</feature>
<feature type="compositionally biased region" description="Basic and acidic residues" evidence="2">
    <location>
        <begin position="58"/>
        <end position="68"/>
    </location>
</feature>
<proteinExistence type="inferred from homology"/>
<protein>
    <recommendedName>
        <fullName evidence="1">Membrane protein insertase YidC</fullName>
    </recommendedName>
    <alternativeName>
        <fullName evidence="1">Foldase YidC</fullName>
    </alternativeName>
    <alternativeName>
        <fullName evidence="1">Membrane integrase YidC</fullName>
    </alternativeName>
    <alternativeName>
        <fullName evidence="1">Membrane protein YidC</fullName>
    </alternativeName>
</protein>
<name>YIDC_LEPIC</name>